<gene>
    <name evidence="1" type="primary">leuS</name>
    <name type="ordered locus">BAPKO_0261</name>
    <name type="ordered locus">BafPKo_0253</name>
</gene>
<dbReference type="EC" id="6.1.1.4" evidence="1"/>
<dbReference type="EMBL" id="CP000395">
    <property type="protein sequence ID" value="ABH01518.1"/>
    <property type="molecule type" value="Genomic_DNA"/>
</dbReference>
<dbReference type="EMBL" id="CP002933">
    <property type="protein sequence ID" value="AEL69479.1"/>
    <property type="molecule type" value="Genomic_DNA"/>
</dbReference>
<dbReference type="RefSeq" id="WP_011600919.1">
    <property type="nucleotide sequence ID" value="NC_008277.1"/>
</dbReference>
<dbReference type="SMR" id="Q0SNR0"/>
<dbReference type="STRING" id="29518.BLA32_03040"/>
<dbReference type="KEGG" id="baf:BAPKO_0261"/>
<dbReference type="KEGG" id="bafz:BafPKo_0253"/>
<dbReference type="PATRIC" id="fig|390236.22.peg.247"/>
<dbReference type="eggNOG" id="COG0495">
    <property type="taxonomic scope" value="Bacteria"/>
</dbReference>
<dbReference type="HOGENOM" id="CLU_004427_0_0_12"/>
<dbReference type="OrthoDB" id="9810365at2"/>
<dbReference type="Proteomes" id="UP000005216">
    <property type="component" value="Chromosome"/>
</dbReference>
<dbReference type="GO" id="GO:0005829">
    <property type="term" value="C:cytosol"/>
    <property type="evidence" value="ECO:0007669"/>
    <property type="project" value="TreeGrafter"/>
</dbReference>
<dbReference type="GO" id="GO:0002161">
    <property type="term" value="F:aminoacyl-tRNA deacylase activity"/>
    <property type="evidence" value="ECO:0007669"/>
    <property type="project" value="InterPro"/>
</dbReference>
<dbReference type="GO" id="GO:0005524">
    <property type="term" value="F:ATP binding"/>
    <property type="evidence" value="ECO:0007669"/>
    <property type="project" value="UniProtKB-UniRule"/>
</dbReference>
<dbReference type="GO" id="GO:0004823">
    <property type="term" value="F:leucine-tRNA ligase activity"/>
    <property type="evidence" value="ECO:0007669"/>
    <property type="project" value="UniProtKB-UniRule"/>
</dbReference>
<dbReference type="GO" id="GO:0006429">
    <property type="term" value="P:leucyl-tRNA aminoacylation"/>
    <property type="evidence" value="ECO:0007669"/>
    <property type="project" value="UniProtKB-UniRule"/>
</dbReference>
<dbReference type="CDD" id="cd07958">
    <property type="entry name" value="Anticodon_Ia_Leu_BEm"/>
    <property type="match status" value="1"/>
</dbReference>
<dbReference type="CDD" id="cd00812">
    <property type="entry name" value="LeuRS_core"/>
    <property type="match status" value="1"/>
</dbReference>
<dbReference type="FunFam" id="3.40.50.620:FF:000056">
    <property type="entry name" value="Leucine--tRNA ligase"/>
    <property type="match status" value="1"/>
</dbReference>
<dbReference type="FunFam" id="3.40.50.620:FF:000077">
    <property type="entry name" value="Leucine--tRNA ligase"/>
    <property type="match status" value="1"/>
</dbReference>
<dbReference type="FunFam" id="1.10.730.10:FF:000011">
    <property type="entry name" value="Leucine--tRNA ligase chloroplastic/mitochondrial"/>
    <property type="match status" value="1"/>
</dbReference>
<dbReference type="Gene3D" id="3.40.50.620">
    <property type="entry name" value="HUPs"/>
    <property type="match status" value="2"/>
</dbReference>
<dbReference type="Gene3D" id="1.10.730.10">
    <property type="entry name" value="Isoleucyl-tRNA Synthetase, Domain 1"/>
    <property type="match status" value="1"/>
</dbReference>
<dbReference type="HAMAP" id="MF_00049_B">
    <property type="entry name" value="Leu_tRNA_synth_B"/>
    <property type="match status" value="1"/>
</dbReference>
<dbReference type="InterPro" id="IPR001412">
    <property type="entry name" value="aa-tRNA-synth_I_CS"/>
</dbReference>
<dbReference type="InterPro" id="IPR002302">
    <property type="entry name" value="Leu-tRNA-ligase"/>
</dbReference>
<dbReference type="InterPro" id="IPR025709">
    <property type="entry name" value="Leu_tRNA-synth_edit"/>
</dbReference>
<dbReference type="InterPro" id="IPR013155">
    <property type="entry name" value="M/V/L/I-tRNA-synth_anticd-bd"/>
</dbReference>
<dbReference type="InterPro" id="IPR015413">
    <property type="entry name" value="Methionyl/Leucyl_tRNA_Synth"/>
</dbReference>
<dbReference type="InterPro" id="IPR014729">
    <property type="entry name" value="Rossmann-like_a/b/a_fold"/>
</dbReference>
<dbReference type="InterPro" id="IPR009080">
    <property type="entry name" value="tRNAsynth_Ia_anticodon-bd"/>
</dbReference>
<dbReference type="InterPro" id="IPR009008">
    <property type="entry name" value="Val/Leu/Ile-tRNA-synth_edit"/>
</dbReference>
<dbReference type="NCBIfam" id="TIGR00396">
    <property type="entry name" value="leuS_bact"/>
    <property type="match status" value="1"/>
</dbReference>
<dbReference type="PANTHER" id="PTHR43740:SF2">
    <property type="entry name" value="LEUCINE--TRNA LIGASE, MITOCHONDRIAL"/>
    <property type="match status" value="1"/>
</dbReference>
<dbReference type="PANTHER" id="PTHR43740">
    <property type="entry name" value="LEUCYL-TRNA SYNTHETASE"/>
    <property type="match status" value="1"/>
</dbReference>
<dbReference type="Pfam" id="PF08264">
    <property type="entry name" value="Anticodon_1"/>
    <property type="match status" value="1"/>
</dbReference>
<dbReference type="Pfam" id="PF13603">
    <property type="entry name" value="tRNA-synt_1_2"/>
    <property type="match status" value="1"/>
</dbReference>
<dbReference type="Pfam" id="PF09334">
    <property type="entry name" value="tRNA-synt_1g"/>
    <property type="match status" value="1"/>
</dbReference>
<dbReference type="PRINTS" id="PR00985">
    <property type="entry name" value="TRNASYNTHLEU"/>
</dbReference>
<dbReference type="SUPFAM" id="SSF47323">
    <property type="entry name" value="Anticodon-binding domain of a subclass of class I aminoacyl-tRNA synthetases"/>
    <property type="match status" value="1"/>
</dbReference>
<dbReference type="SUPFAM" id="SSF52374">
    <property type="entry name" value="Nucleotidylyl transferase"/>
    <property type="match status" value="1"/>
</dbReference>
<dbReference type="SUPFAM" id="SSF50677">
    <property type="entry name" value="ValRS/IleRS/LeuRS editing domain"/>
    <property type="match status" value="1"/>
</dbReference>
<dbReference type="PROSITE" id="PS00178">
    <property type="entry name" value="AA_TRNA_LIGASE_I"/>
    <property type="match status" value="1"/>
</dbReference>
<reference key="1">
    <citation type="journal article" date="2006" name="BMC Genomics">
        <title>Comparative genome analysis: selection pressure on the Borrelia vls cassettes is essential for infectivity.</title>
        <authorList>
            <person name="Gloeckner G."/>
            <person name="Schulte-Spechtel U."/>
            <person name="Schilhabel M."/>
            <person name="Felder M."/>
            <person name="Suehnel J."/>
            <person name="Wilske B."/>
            <person name="Platzer M."/>
        </authorList>
    </citation>
    <scope>NUCLEOTIDE SEQUENCE [LARGE SCALE GENOMIC DNA]</scope>
    <source>
        <strain>PKo</strain>
    </source>
</reference>
<reference key="2">
    <citation type="journal article" date="2011" name="J. Bacteriol.">
        <title>Whole-genome sequences of two Borrelia afzelii and two Borrelia garinii Lyme disease agent isolates.</title>
        <authorList>
            <person name="Casjens S.R."/>
            <person name="Mongodin E.F."/>
            <person name="Qiu W.G."/>
            <person name="Dunn J.J."/>
            <person name="Luft B.J."/>
            <person name="Fraser-Liggett C.M."/>
            <person name="Schutzer S.E."/>
        </authorList>
    </citation>
    <scope>NUCLEOTIDE SEQUENCE [LARGE SCALE GENOMIC DNA]</scope>
    <source>
        <strain>PKo</strain>
    </source>
</reference>
<evidence type="ECO:0000255" key="1">
    <source>
        <dbReference type="HAMAP-Rule" id="MF_00049"/>
    </source>
</evidence>
<proteinExistence type="inferred from homology"/>
<keyword id="KW-0030">Aminoacyl-tRNA synthetase</keyword>
<keyword id="KW-0067">ATP-binding</keyword>
<keyword id="KW-0963">Cytoplasm</keyword>
<keyword id="KW-0436">Ligase</keyword>
<keyword id="KW-0547">Nucleotide-binding</keyword>
<keyword id="KW-0648">Protein biosynthesis</keyword>
<comment type="catalytic activity">
    <reaction evidence="1">
        <text>tRNA(Leu) + L-leucine + ATP = L-leucyl-tRNA(Leu) + AMP + diphosphate</text>
        <dbReference type="Rhea" id="RHEA:11688"/>
        <dbReference type="Rhea" id="RHEA-COMP:9613"/>
        <dbReference type="Rhea" id="RHEA-COMP:9622"/>
        <dbReference type="ChEBI" id="CHEBI:30616"/>
        <dbReference type="ChEBI" id="CHEBI:33019"/>
        <dbReference type="ChEBI" id="CHEBI:57427"/>
        <dbReference type="ChEBI" id="CHEBI:78442"/>
        <dbReference type="ChEBI" id="CHEBI:78494"/>
        <dbReference type="ChEBI" id="CHEBI:456215"/>
        <dbReference type="EC" id="6.1.1.4"/>
    </reaction>
</comment>
<comment type="subcellular location">
    <subcellularLocation>
        <location evidence="1">Cytoplasm</location>
    </subcellularLocation>
</comment>
<comment type="similarity">
    <text evidence="1">Belongs to the class-I aminoacyl-tRNA synthetase family.</text>
</comment>
<feature type="chain" id="PRO_1000009299" description="Leucine--tRNA ligase">
    <location>
        <begin position="1"/>
        <end position="840"/>
    </location>
</feature>
<feature type="short sequence motif" description="'HIGH' region">
    <location>
        <begin position="44"/>
        <end position="55"/>
    </location>
</feature>
<feature type="short sequence motif" description="'KMSKS' region">
    <location>
        <begin position="617"/>
        <end position="621"/>
    </location>
</feature>
<feature type="binding site" evidence="1">
    <location>
        <position position="620"/>
    </location>
    <ligand>
        <name>ATP</name>
        <dbReference type="ChEBI" id="CHEBI:30616"/>
    </ligand>
</feature>
<sequence length="840" mass="98167">MSKYEFIKIEKKWQEFWDNNKTYKVIEDPNIPKEKRLYILDMFPYPSANGLHVGHPEGYTATDIFARYKILNGFHVLHPIGFDSFGLPAENYAIQTGTHPKKSTEENINKFKKQIKALGFAYDWDREIRTHDENYYKWTQWIFLQLYKKGLAYAKEMPVWYCPELGTVLANEEIIQTPNGPKSERGFHNVEKKYLRQWVLKITKYAERLLNDLEELEWPESVKEMQRNWIGKSTGVEIDFEIEGYNDKIKVFTTRPDTIFGITYLVIAPENKLVEKITKDNFKSNVLKYIKQEELKSDLKRTSLEKDKSGVFTGSYAFHPITNVKIPIWVGSYVLGTYGSGAVMGVPAHDERDFQFAKKYKLKILPVISKSGKNEILEKAFINDGISINSPDEFNNLKNSEVKDKVIKWLTKNKKGKETVTYKLRDWVFSRQRYWGEPIPILFDKLGNAIPLEKNDLPLKLPETANYKPSGTGESPLSRIKNWVNVKDTDFTRETNTMPQWAGSCWYYLRYLDPKNSKEFANHKKIEYWMPVDLYIGGAEHTVLHLLYSRFWHKVLYDLGHVNTKEPFKKLINQGIITAFSYQKENGVLIPNDQVIEKDNKFFDKKDNKEVTQVIAKMSKSLKNVINPDGIIKEFGADSIRIYEMFMGPLTDSKPWNTKGIIGVFRFLNKIWNLREKELSKDNPPKEIMSQLHKVIKKVTEDTEKLNFNTAISAMMIFINELSKYEKNYLNIFKPFIIILSPYAPHLAEELWEYIGETPSLFKNSKWPKFDETLIIKETKEIVLQINGKIKDKILLNKETDEEELKEIAMENSKIKSNLFNKKIVKIIVIKNKLVNIVIK</sequence>
<organism>
    <name type="scientific">Borreliella afzelii (strain PKo)</name>
    <name type="common">Borrelia afzelii</name>
    <dbReference type="NCBI Taxonomy" id="390236"/>
    <lineage>
        <taxon>Bacteria</taxon>
        <taxon>Pseudomonadati</taxon>
        <taxon>Spirochaetota</taxon>
        <taxon>Spirochaetia</taxon>
        <taxon>Spirochaetales</taxon>
        <taxon>Borreliaceae</taxon>
        <taxon>Borreliella</taxon>
    </lineage>
</organism>
<accession>Q0SNR0</accession>
<accession>G0IR93</accession>
<name>SYL_BORAP</name>
<protein>
    <recommendedName>
        <fullName evidence="1">Leucine--tRNA ligase</fullName>
        <ecNumber evidence="1">6.1.1.4</ecNumber>
    </recommendedName>
    <alternativeName>
        <fullName evidence="1">Leucyl-tRNA synthetase</fullName>
        <shortName evidence="1">LeuRS</shortName>
    </alternativeName>
</protein>